<protein>
    <recommendedName>
        <fullName evidence="1">Hydroxymethylglutaryl-CoA synthase</fullName>
        <shortName evidence="1">HMG-CoA synthase</shortName>
        <shortName evidence="1">HMGCS</shortName>
        <ecNumber evidence="1">2.3.3.10</ecNumber>
    </recommendedName>
</protein>
<organism>
    <name type="scientific">Saccharolobus islandicus (strain L.S.2.15 / Lassen #1)</name>
    <name type="common">Sulfolobus islandicus</name>
    <dbReference type="NCBI Taxonomy" id="429572"/>
    <lineage>
        <taxon>Archaea</taxon>
        <taxon>Thermoproteota</taxon>
        <taxon>Thermoprotei</taxon>
        <taxon>Sulfolobales</taxon>
        <taxon>Sulfolobaceae</taxon>
        <taxon>Saccharolobus</taxon>
    </lineage>
</organism>
<dbReference type="EC" id="2.3.3.10" evidence="1"/>
<dbReference type="EMBL" id="CP001399">
    <property type="protein sequence ID" value="ACP35699.1"/>
    <property type="molecule type" value="Genomic_DNA"/>
</dbReference>
<dbReference type="RefSeq" id="WP_012713834.1">
    <property type="nucleotide sequence ID" value="NC_012589.1"/>
</dbReference>
<dbReference type="SMR" id="C3MQN6"/>
<dbReference type="GeneID" id="7806103"/>
<dbReference type="KEGG" id="sis:LS215_1695"/>
<dbReference type="HOGENOM" id="CLU_039592_7_0_2"/>
<dbReference type="OrthoDB" id="5812at2157"/>
<dbReference type="UniPathway" id="UPA00058">
    <property type="reaction ID" value="UER00102"/>
</dbReference>
<dbReference type="Proteomes" id="UP000001747">
    <property type="component" value="Chromosome"/>
</dbReference>
<dbReference type="GO" id="GO:0003985">
    <property type="term" value="F:acetyl-CoA C-acetyltransferase activity"/>
    <property type="evidence" value="ECO:0007669"/>
    <property type="project" value="UniProtKB-UniRule"/>
</dbReference>
<dbReference type="GO" id="GO:0004421">
    <property type="term" value="F:hydroxymethylglutaryl-CoA synthase activity"/>
    <property type="evidence" value="ECO:0007669"/>
    <property type="project" value="InterPro"/>
</dbReference>
<dbReference type="GO" id="GO:0010142">
    <property type="term" value="P:farnesyl diphosphate biosynthetic process, mevalonate pathway"/>
    <property type="evidence" value="ECO:0007669"/>
    <property type="project" value="TreeGrafter"/>
</dbReference>
<dbReference type="GO" id="GO:0019287">
    <property type="term" value="P:isopentenyl diphosphate biosynthetic process, mevalonate pathway"/>
    <property type="evidence" value="ECO:0007669"/>
    <property type="project" value="UniProtKB-UniRule"/>
</dbReference>
<dbReference type="CDD" id="cd00827">
    <property type="entry name" value="init_cond_enzymes"/>
    <property type="match status" value="1"/>
</dbReference>
<dbReference type="FunFam" id="3.40.47.10:FF:000046">
    <property type="entry name" value="UPF0219 protein M1627_1703"/>
    <property type="match status" value="1"/>
</dbReference>
<dbReference type="Gene3D" id="3.40.47.10">
    <property type="match status" value="1"/>
</dbReference>
<dbReference type="HAMAP" id="MF_01409">
    <property type="entry name" value="HMG_CoA_synth_arch"/>
    <property type="match status" value="1"/>
</dbReference>
<dbReference type="InterPro" id="IPR013747">
    <property type="entry name" value="ACP_syn_III_C"/>
</dbReference>
<dbReference type="InterPro" id="IPR004656">
    <property type="entry name" value="HMG_CoA_Synthase"/>
</dbReference>
<dbReference type="InterPro" id="IPR016039">
    <property type="entry name" value="Thiolase-like"/>
</dbReference>
<dbReference type="NCBIfam" id="TIGR00748">
    <property type="entry name" value="HMG_CoA_syn_Arc"/>
    <property type="match status" value="1"/>
</dbReference>
<dbReference type="NCBIfam" id="NF003274">
    <property type="entry name" value="PRK04262.1"/>
    <property type="match status" value="1"/>
</dbReference>
<dbReference type="PANTHER" id="PTHR43323">
    <property type="entry name" value="3-HYDROXY-3-METHYLGLUTARYL COENZYME A SYNTHASE"/>
    <property type="match status" value="1"/>
</dbReference>
<dbReference type="PANTHER" id="PTHR43323:SF2">
    <property type="entry name" value="HYDROXYMETHYLGLUTARYL-COA SYNTHASE"/>
    <property type="match status" value="1"/>
</dbReference>
<dbReference type="Pfam" id="PF08541">
    <property type="entry name" value="ACP_syn_III_C"/>
    <property type="match status" value="1"/>
</dbReference>
<dbReference type="SUPFAM" id="SSF53901">
    <property type="entry name" value="Thiolase-like"/>
    <property type="match status" value="2"/>
</dbReference>
<keyword id="KW-0012">Acyltransferase</keyword>
<keyword id="KW-0414">Isoprene biosynthesis</keyword>
<keyword id="KW-0808">Transferase</keyword>
<feature type="chain" id="PRO_1000215215" description="Hydroxymethylglutaryl-CoA synthase">
    <location>
        <begin position="1"/>
        <end position="350"/>
    </location>
</feature>
<feature type="active site" description="Proton donor/acceptor" evidence="1">
    <location>
        <position position="80"/>
    </location>
</feature>
<feature type="active site" description="Acyl-thioester intermediate" evidence="1">
    <location>
        <position position="112"/>
    </location>
</feature>
<feature type="active site" description="Proton donor/acceptor" evidence="1">
    <location>
        <position position="237"/>
    </location>
</feature>
<feature type="binding site" evidence="1">
    <location>
        <position position="29"/>
    </location>
    <ligand>
        <name>(3S)-3-hydroxy-3-methylglutaryl-CoA</name>
        <dbReference type="ChEBI" id="CHEBI:43074"/>
    </ligand>
</feature>
<feature type="binding site" evidence="1">
    <location>
        <position position="112"/>
    </location>
    <ligand>
        <name>(3S)-3-hydroxy-3-methylglutaryl-CoA</name>
        <dbReference type="ChEBI" id="CHEBI:43074"/>
    </ligand>
</feature>
<feature type="binding site" evidence="1">
    <location>
        <position position="153"/>
    </location>
    <ligand>
        <name>(3S)-3-hydroxy-3-methylglutaryl-CoA</name>
        <dbReference type="ChEBI" id="CHEBI:43074"/>
    </ligand>
</feature>
<feature type="binding site" evidence="1">
    <location>
        <position position="204"/>
    </location>
    <ligand>
        <name>(3S)-3-hydroxy-3-methylglutaryl-CoA</name>
        <dbReference type="ChEBI" id="CHEBI:43074"/>
    </ligand>
</feature>
<feature type="binding site" evidence="1">
    <location>
        <position position="237"/>
    </location>
    <ligand>
        <name>(3S)-3-hydroxy-3-methylglutaryl-CoA</name>
        <dbReference type="ChEBI" id="CHEBI:43074"/>
    </ligand>
</feature>
<feature type="binding site" evidence="1">
    <location>
        <position position="242"/>
    </location>
    <ligand>
        <name>CoA</name>
        <dbReference type="ChEBI" id="CHEBI:57287"/>
        <note>ligand shared with acetoacetyl-CoA thiolase</note>
    </ligand>
</feature>
<feature type="binding site" evidence="1">
    <location>
        <position position="269"/>
    </location>
    <ligand>
        <name>(3S)-3-hydroxy-3-methylglutaryl-CoA</name>
        <dbReference type="ChEBI" id="CHEBI:43074"/>
    </ligand>
</feature>
<feature type="binding site" evidence="1">
    <location>
        <position position="299"/>
    </location>
    <ligand>
        <name>(3S)-3-hydroxy-3-methylglutaryl-CoA</name>
        <dbReference type="ChEBI" id="CHEBI:43074"/>
    </ligand>
</feature>
<reference key="1">
    <citation type="journal article" date="2009" name="Proc. Natl. Acad. Sci. U.S.A.">
        <title>Biogeography of the Sulfolobus islandicus pan-genome.</title>
        <authorList>
            <person name="Reno M.L."/>
            <person name="Held N.L."/>
            <person name="Fields C.J."/>
            <person name="Burke P.V."/>
            <person name="Whitaker R.J."/>
        </authorList>
    </citation>
    <scope>NUCLEOTIDE SEQUENCE [LARGE SCALE GENOMIC DNA]</scope>
    <source>
        <strain>L.S.2.15 / Lassen #1</strain>
    </source>
</reference>
<sequence length="350" mass="37938">MLSGILGWGAYVPRYRIKVEDIAKMWGYDEGVVRSLGLTEKSVPGHDEDSTTIAWESSINAIKRAQVDPSKIRLVLFGSESKVYAVKPTSTILIDALGINNYSATADMEFACRAASVGLRLASSFVLHNSDSYALVIGADTAQSNPGDVLELSSAAAGVAFVVGNVDEKHSAAVIEYSSSYTSDTPDFWRRDGTPYPVHGEGFTGEPAYFHHIISAVSDLLQNSGLKISDFDYFVFHQPNGKFPIQVAKKLGVQLEKVKQGLVSPYIGNPYNASALLGLAKVLDIAKPGERILVAPFGSGAGSDAFSILVSEGILEKQKLAKTVEYYINNKKLVSYAEYAKYTNKIKVYE</sequence>
<evidence type="ECO:0000255" key="1">
    <source>
        <dbReference type="HAMAP-Rule" id="MF_01409"/>
    </source>
</evidence>
<proteinExistence type="inferred from homology"/>
<gene>
    <name type="ordered locus">LS215_1695</name>
</gene>
<name>HMGCS_SACI2</name>
<accession>C3MQN6</accession>
<comment type="function">
    <text evidence="1">Catalyzes the condensation of acetyl-CoA with acetoacetyl-CoA to form 3-hydroxy-3-methylglutaryl-CoA (HMG-CoA). Functions in the mevalonate (MVA) pathway leading to isopentenyl diphosphate (IPP), a key precursor for the biosynthesis of isoprenoid compounds that are building blocks of archaeal membrane lipids.</text>
</comment>
<comment type="catalytic activity">
    <reaction evidence="1">
        <text>acetoacetyl-CoA + acetyl-CoA + H2O = (3S)-3-hydroxy-3-methylglutaryl-CoA + CoA + H(+)</text>
        <dbReference type="Rhea" id="RHEA:10188"/>
        <dbReference type="ChEBI" id="CHEBI:15377"/>
        <dbReference type="ChEBI" id="CHEBI:15378"/>
        <dbReference type="ChEBI" id="CHEBI:43074"/>
        <dbReference type="ChEBI" id="CHEBI:57286"/>
        <dbReference type="ChEBI" id="CHEBI:57287"/>
        <dbReference type="ChEBI" id="CHEBI:57288"/>
        <dbReference type="EC" id="2.3.3.10"/>
    </reaction>
    <physiologicalReaction direction="left-to-right" evidence="1">
        <dbReference type="Rhea" id="RHEA:10189"/>
    </physiologicalReaction>
</comment>
<comment type="pathway">
    <text evidence="1">Metabolic intermediate biosynthesis; (R)-mevalonate biosynthesis; (R)-mevalonate from acetyl-CoA: step 2/3.</text>
</comment>
<comment type="subunit">
    <text evidence="1">Interacts with acetoacetyl-CoA thiolase that catalyzes the precedent step in the pathway and with a DUF35 protein. The acetoacetyl-CoA thiolase/HMG-CoA synthase complex channels the intermediate via a fused CoA-binding site, which allows for efficient coupling of the endergonic thiolase reaction with the exergonic HMGCS reaction.</text>
</comment>
<comment type="similarity">
    <text evidence="1">Belongs to the thiolase-like superfamily. Archaeal HMG-CoA synthase family.</text>
</comment>